<feature type="chain" id="PRO_0000177882" description="D-alanine--D-alanine ligase">
    <location>
        <begin position="1"/>
        <end position="348"/>
    </location>
</feature>
<feature type="domain" description="ATP-grasp" evidence="2">
    <location>
        <begin position="132"/>
        <end position="334"/>
    </location>
</feature>
<feature type="binding site" evidence="2">
    <location>
        <begin position="162"/>
        <end position="217"/>
    </location>
    <ligand>
        <name>ATP</name>
        <dbReference type="ChEBI" id="CHEBI:30616"/>
    </ligand>
</feature>
<feature type="binding site" evidence="2">
    <location>
        <position position="288"/>
    </location>
    <ligand>
        <name>Mg(2+)</name>
        <dbReference type="ChEBI" id="CHEBI:18420"/>
        <label>1</label>
    </ligand>
</feature>
<feature type="binding site" evidence="2">
    <location>
        <position position="301"/>
    </location>
    <ligand>
        <name>Mg(2+)</name>
        <dbReference type="ChEBI" id="CHEBI:18420"/>
        <label>1</label>
    </ligand>
</feature>
<feature type="binding site" evidence="2">
    <location>
        <position position="301"/>
    </location>
    <ligand>
        <name>Mg(2+)</name>
        <dbReference type="ChEBI" id="CHEBI:18420"/>
        <label>2</label>
    </ligand>
</feature>
<feature type="binding site" evidence="2">
    <location>
        <position position="303"/>
    </location>
    <ligand>
        <name>Mg(2+)</name>
        <dbReference type="ChEBI" id="CHEBI:18420"/>
        <label>2</label>
    </ligand>
</feature>
<sequence>MSKETLILLYGGRSAEREVSVLSAESVMRAINYDKFFVKTYFITQVGQFIKTQEFDEMPSSDEKLMTNQTVDLDKMVRPSDIYDDNAIVFPVLHGPMGEDGSIQGFLEVLRMPYVGTNILSSSVAMDKITTKQVLATVGVPQVAYQTYFEGDDLEHAIKLSLETLSFPIFVKPANMGSSVGISKATDESSLRSAIDLALKYDSRILIEQGVTAREIEVGILGNNDVKTTFPGEVVKDVDFYDYDAKYIDNKITMDIPAKVDEATMEAMRQYASKAFKAIGACGLSRCDFFLTKDGQIFLNELNTMPGFTQWSMYPLLWENMGLTYSDLIEKLVMLAKEMFEKRESHLI</sequence>
<comment type="function">
    <text evidence="2">Cell wall formation.</text>
</comment>
<comment type="catalytic activity">
    <reaction evidence="2">
        <text>2 D-alanine + ATP = D-alanyl-D-alanine + ADP + phosphate + H(+)</text>
        <dbReference type="Rhea" id="RHEA:11224"/>
        <dbReference type="ChEBI" id="CHEBI:15378"/>
        <dbReference type="ChEBI" id="CHEBI:30616"/>
        <dbReference type="ChEBI" id="CHEBI:43474"/>
        <dbReference type="ChEBI" id="CHEBI:57416"/>
        <dbReference type="ChEBI" id="CHEBI:57822"/>
        <dbReference type="ChEBI" id="CHEBI:456216"/>
        <dbReference type="EC" id="6.3.2.4"/>
    </reaction>
</comment>
<comment type="cofactor">
    <cofactor evidence="1">
        <name>Mg(2+)</name>
        <dbReference type="ChEBI" id="CHEBI:18420"/>
    </cofactor>
    <cofactor evidence="1">
        <name>Mn(2+)</name>
        <dbReference type="ChEBI" id="CHEBI:29035"/>
    </cofactor>
    <text evidence="1">Binds 2 magnesium or manganese ions per subunit.</text>
</comment>
<comment type="pathway">
    <text evidence="2">Cell wall biogenesis; peptidoglycan biosynthesis.</text>
</comment>
<comment type="subcellular location">
    <subcellularLocation>
        <location evidence="2">Cytoplasm</location>
    </subcellularLocation>
</comment>
<comment type="similarity">
    <text evidence="2">Belongs to the D-alanine--D-alanine ligase family.</text>
</comment>
<accession>Q8E640</accession>
<protein>
    <recommendedName>
        <fullName evidence="2">D-alanine--D-alanine ligase</fullName>
        <ecNumber evidence="2">6.3.2.4</ecNumber>
    </recommendedName>
    <alternativeName>
        <fullName evidence="2">D-Ala-D-Ala ligase</fullName>
    </alternativeName>
    <alternativeName>
        <fullName evidence="2">D-alanylalanine synthetase</fullName>
    </alternativeName>
</protein>
<gene>
    <name evidence="2" type="primary">ddl</name>
    <name type="ordered locus">gbs0787</name>
</gene>
<dbReference type="EC" id="6.3.2.4" evidence="2"/>
<dbReference type="EMBL" id="AL766847">
    <property type="protein sequence ID" value="CAD46431.1"/>
    <property type="molecule type" value="Genomic_DNA"/>
</dbReference>
<dbReference type="RefSeq" id="WP_000032513.1">
    <property type="nucleotide sequence ID" value="NC_004368.1"/>
</dbReference>
<dbReference type="SMR" id="Q8E640"/>
<dbReference type="KEGG" id="san:gbs0787"/>
<dbReference type="eggNOG" id="COG1181">
    <property type="taxonomic scope" value="Bacteria"/>
</dbReference>
<dbReference type="HOGENOM" id="CLU_039268_0_0_9"/>
<dbReference type="UniPathway" id="UPA00219"/>
<dbReference type="Proteomes" id="UP000000823">
    <property type="component" value="Chromosome"/>
</dbReference>
<dbReference type="GO" id="GO:0005829">
    <property type="term" value="C:cytosol"/>
    <property type="evidence" value="ECO:0007669"/>
    <property type="project" value="TreeGrafter"/>
</dbReference>
<dbReference type="GO" id="GO:0005524">
    <property type="term" value="F:ATP binding"/>
    <property type="evidence" value="ECO:0007669"/>
    <property type="project" value="UniProtKB-KW"/>
</dbReference>
<dbReference type="GO" id="GO:0008716">
    <property type="term" value="F:D-alanine-D-alanine ligase activity"/>
    <property type="evidence" value="ECO:0007669"/>
    <property type="project" value="UniProtKB-UniRule"/>
</dbReference>
<dbReference type="GO" id="GO:0046872">
    <property type="term" value="F:metal ion binding"/>
    <property type="evidence" value="ECO:0007669"/>
    <property type="project" value="UniProtKB-KW"/>
</dbReference>
<dbReference type="GO" id="GO:0071555">
    <property type="term" value="P:cell wall organization"/>
    <property type="evidence" value="ECO:0007669"/>
    <property type="project" value="UniProtKB-KW"/>
</dbReference>
<dbReference type="GO" id="GO:0009252">
    <property type="term" value="P:peptidoglycan biosynthetic process"/>
    <property type="evidence" value="ECO:0007669"/>
    <property type="project" value="UniProtKB-UniRule"/>
</dbReference>
<dbReference type="GO" id="GO:0008360">
    <property type="term" value="P:regulation of cell shape"/>
    <property type="evidence" value="ECO:0007669"/>
    <property type="project" value="UniProtKB-KW"/>
</dbReference>
<dbReference type="FunFam" id="3.30.1490.20:FF:000007">
    <property type="entry name" value="D-alanine--D-alanine ligase"/>
    <property type="match status" value="1"/>
</dbReference>
<dbReference type="FunFam" id="3.30.470.20:FF:000008">
    <property type="entry name" value="D-alanine--D-alanine ligase"/>
    <property type="match status" value="1"/>
</dbReference>
<dbReference type="Gene3D" id="3.40.50.20">
    <property type="match status" value="1"/>
</dbReference>
<dbReference type="Gene3D" id="3.30.1490.20">
    <property type="entry name" value="ATP-grasp fold, A domain"/>
    <property type="match status" value="1"/>
</dbReference>
<dbReference type="Gene3D" id="3.30.470.20">
    <property type="entry name" value="ATP-grasp fold, B domain"/>
    <property type="match status" value="1"/>
</dbReference>
<dbReference type="HAMAP" id="MF_00047">
    <property type="entry name" value="Dala_Dala_lig"/>
    <property type="match status" value="1"/>
</dbReference>
<dbReference type="InterPro" id="IPR011761">
    <property type="entry name" value="ATP-grasp"/>
</dbReference>
<dbReference type="InterPro" id="IPR013815">
    <property type="entry name" value="ATP_grasp_subdomain_1"/>
</dbReference>
<dbReference type="InterPro" id="IPR000291">
    <property type="entry name" value="D-Ala_lig_Van_CS"/>
</dbReference>
<dbReference type="InterPro" id="IPR005905">
    <property type="entry name" value="D_ala_D_ala"/>
</dbReference>
<dbReference type="InterPro" id="IPR011095">
    <property type="entry name" value="Dala_Dala_lig_C"/>
</dbReference>
<dbReference type="InterPro" id="IPR011127">
    <property type="entry name" value="Dala_Dala_lig_N"/>
</dbReference>
<dbReference type="InterPro" id="IPR016185">
    <property type="entry name" value="PreATP-grasp_dom_sf"/>
</dbReference>
<dbReference type="NCBIfam" id="TIGR01205">
    <property type="entry name" value="D_ala_D_alaTIGR"/>
    <property type="match status" value="1"/>
</dbReference>
<dbReference type="NCBIfam" id="NF002528">
    <property type="entry name" value="PRK01966.1-4"/>
    <property type="match status" value="1"/>
</dbReference>
<dbReference type="NCBIfam" id="NF002529">
    <property type="entry name" value="PRK01966.1-5"/>
    <property type="match status" value="1"/>
</dbReference>
<dbReference type="PANTHER" id="PTHR23132">
    <property type="entry name" value="D-ALANINE--D-ALANINE LIGASE"/>
    <property type="match status" value="1"/>
</dbReference>
<dbReference type="PANTHER" id="PTHR23132:SF25">
    <property type="entry name" value="D-ALANINE--D-ALANINE LIGASE A"/>
    <property type="match status" value="1"/>
</dbReference>
<dbReference type="Pfam" id="PF07478">
    <property type="entry name" value="Dala_Dala_lig_C"/>
    <property type="match status" value="1"/>
</dbReference>
<dbReference type="Pfam" id="PF01820">
    <property type="entry name" value="Dala_Dala_lig_N"/>
    <property type="match status" value="1"/>
</dbReference>
<dbReference type="PIRSF" id="PIRSF039102">
    <property type="entry name" value="Ddl/VanB"/>
    <property type="match status" value="1"/>
</dbReference>
<dbReference type="SUPFAM" id="SSF56059">
    <property type="entry name" value="Glutathione synthetase ATP-binding domain-like"/>
    <property type="match status" value="1"/>
</dbReference>
<dbReference type="SUPFAM" id="SSF52440">
    <property type="entry name" value="PreATP-grasp domain"/>
    <property type="match status" value="1"/>
</dbReference>
<dbReference type="PROSITE" id="PS50975">
    <property type="entry name" value="ATP_GRASP"/>
    <property type="match status" value="1"/>
</dbReference>
<dbReference type="PROSITE" id="PS00843">
    <property type="entry name" value="DALA_DALA_LIGASE_1"/>
    <property type="match status" value="1"/>
</dbReference>
<dbReference type="PROSITE" id="PS00844">
    <property type="entry name" value="DALA_DALA_LIGASE_2"/>
    <property type="match status" value="1"/>
</dbReference>
<organism>
    <name type="scientific">Streptococcus agalactiae serotype III (strain NEM316)</name>
    <dbReference type="NCBI Taxonomy" id="211110"/>
    <lineage>
        <taxon>Bacteria</taxon>
        <taxon>Bacillati</taxon>
        <taxon>Bacillota</taxon>
        <taxon>Bacilli</taxon>
        <taxon>Lactobacillales</taxon>
        <taxon>Streptococcaceae</taxon>
        <taxon>Streptococcus</taxon>
    </lineage>
</organism>
<proteinExistence type="inferred from homology"/>
<reference key="1">
    <citation type="journal article" date="2002" name="Mol. Microbiol.">
        <title>Genome sequence of Streptococcus agalactiae, a pathogen causing invasive neonatal disease.</title>
        <authorList>
            <person name="Glaser P."/>
            <person name="Rusniok C."/>
            <person name="Buchrieser C."/>
            <person name="Chevalier F."/>
            <person name="Frangeul L."/>
            <person name="Msadek T."/>
            <person name="Zouine M."/>
            <person name="Couve E."/>
            <person name="Lalioui L."/>
            <person name="Poyart C."/>
            <person name="Trieu-Cuot P."/>
            <person name="Kunst F."/>
        </authorList>
    </citation>
    <scope>NUCLEOTIDE SEQUENCE [LARGE SCALE GENOMIC DNA]</scope>
    <source>
        <strain>NEM316</strain>
    </source>
</reference>
<evidence type="ECO:0000250" key="1"/>
<evidence type="ECO:0000255" key="2">
    <source>
        <dbReference type="HAMAP-Rule" id="MF_00047"/>
    </source>
</evidence>
<name>DDL_STRA3</name>
<keyword id="KW-0067">ATP-binding</keyword>
<keyword id="KW-0133">Cell shape</keyword>
<keyword id="KW-0961">Cell wall biogenesis/degradation</keyword>
<keyword id="KW-0963">Cytoplasm</keyword>
<keyword id="KW-0436">Ligase</keyword>
<keyword id="KW-0460">Magnesium</keyword>
<keyword id="KW-0464">Manganese</keyword>
<keyword id="KW-0479">Metal-binding</keyword>
<keyword id="KW-0547">Nucleotide-binding</keyword>
<keyword id="KW-0573">Peptidoglycan synthesis</keyword>